<name>CYB_DOBMI</name>
<proteinExistence type="inferred from homology"/>
<organism>
    <name type="scientific">Dobsonia minor</name>
    <name type="common">Lesser bare-backed fruit bat</name>
    <dbReference type="NCBI Taxonomy" id="170215"/>
    <lineage>
        <taxon>Eukaryota</taxon>
        <taxon>Metazoa</taxon>
        <taxon>Chordata</taxon>
        <taxon>Craniata</taxon>
        <taxon>Vertebrata</taxon>
        <taxon>Euteleostomi</taxon>
        <taxon>Mammalia</taxon>
        <taxon>Eutheria</taxon>
        <taxon>Laurasiatheria</taxon>
        <taxon>Chiroptera</taxon>
        <taxon>Yinpterochiroptera</taxon>
        <taxon>Pteropodoidea</taxon>
        <taxon>Pteropodidae</taxon>
        <taxon>Pteropodinae</taxon>
        <taxon>Dobsonia</taxon>
    </lineage>
</organism>
<protein>
    <recommendedName>
        <fullName>Cytochrome b</fullName>
    </recommendedName>
    <alternativeName>
        <fullName>Complex III subunit 3</fullName>
    </alternativeName>
    <alternativeName>
        <fullName>Complex III subunit III</fullName>
    </alternativeName>
    <alternativeName>
        <fullName>Cytochrome b-c1 complex subunit 3</fullName>
    </alternativeName>
    <alternativeName>
        <fullName>Ubiquinol-cytochrome-c reductase complex cytochrome b subunit</fullName>
    </alternativeName>
</protein>
<feature type="chain" id="PRO_0000254798" description="Cytochrome b">
    <location>
        <begin position="1"/>
        <end position="379"/>
    </location>
</feature>
<feature type="transmembrane region" description="Helical" evidence="2">
    <location>
        <begin position="33"/>
        <end position="53"/>
    </location>
</feature>
<feature type="transmembrane region" description="Helical" evidence="2">
    <location>
        <begin position="77"/>
        <end position="98"/>
    </location>
</feature>
<feature type="transmembrane region" description="Helical" evidence="2">
    <location>
        <begin position="113"/>
        <end position="133"/>
    </location>
</feature>
<feature type="transmembrane region" description="Helical" evidence="2">
    <location>
        <begin position="178"/>
        <end position="198"/>
    </location>
</feature>
<feature type="transmembrane region" description="Helical" evidence="2">
    <location>
        <begin position="226"/>
        <end position="246"/>
    </location>
</feature>
<feature type="transmembrane region" description="Helical" evidence="2">
    <location>
        <begin position="288"/>
        <end position="308"/>
    </location>
</feature>
<feature type="transmembrane region" description="Helical" evidence="2">
    <location>
        <begin position="320"/>
        <end position="340"/>
    </location>
</feature>
<feature type="transmembrane region" description="Helical" evidence="2">
    <location>
        <begin position="347"/>
        <end position="367"/>
    </location>
</feature>
<feature type="binding site" description="axial binding residue" evidence="2">
    <location>
        <position position="83"/>
    </location>
    <ligand>
        <name>heme b</name>
        <dbReference type="ChEBI" id="CHEBI:60344"/>
        <label>b562</label>
    </ligand>
    <ligandPart>
        <name>Fe</name>
        <dbReference type="ChEBI" id="CHEBI:18248"/>
    </ligandPart>
</feature>
<feature type="binding site" description="axial binding residue" evidence="2">
    <location>
        <position position="97"/>
    </location>
    <ligand>
        <name>heme b</name>
        <dbReference type="ChEBI" id="CHEBI:60344"/>
        <label>b566</label>
    </ligand>
    <ligandPart>
        <name>Fe</name>
        <dbReference type="ChEBI" id="CHEBI:18248"/>
    </ligandPart>
</feature>
<feature type="binding site" description="axial binding residue" evidence="2">
    <location>
        <position position="182"/>
    </location>
    <ligand>
        <name>heme b</name>
        <dbReference type="ChEBI" id="CHEBI:60344"/>
        <label>b562</label>
    </ligand>
    <ligandPart>
        <name>Fe</name>
        <dbReference type="ChEBI" id="CHEBI:18248"/>
    </ligandPart>
</feature>
<feature type="binding site" description="axial binding residue" evidence="2">
    <location>
        <position position="196"/>
    </location>
    <ligand>
        <name>heme b</name>
        <dbReference type="ChEBI" id="CHEBI:60344"/>
        <label>b566</label>
    </ligand>
    <ligandPart>
        <name>Fe</name>
        <dbReference type="ChEBI" id="CHEBI:18248"/>
    </ligandPart>
</feature>
<feature type="binding site" evidence="2">
    <location>
        <position position="201"/>
    </location>
    <ligand>
        <name>a ubiquinone</name>
        <dbReference type="ChEBI" id="CHEBI:16389"/>
    </ligand>
</feature>
<comment type="function">
    <text evidence="2">Component of the ubiquinol-cytochrome c reductase complex (complex III or cytochrome b-c1 complex) that is part of the mitochondrial respiratory chain. The b-c1 complex mediates electron transfer from ubiquinol to cytochrome c. Contributes to the generation of a proton gradient across the mitochondrial membrane that is then used for ATP synthesis.</text>
</comment>
<comment type="cofactor">
    <cofactor evidence="2">
        <name>heme b</name>
        <dbReference type="ChEBI" id="CHEBI:60344"/>
    </cofactor>
    <text evidence="2">Binds 2 heme b groups non-covalently.</text>
</comment>
<comment type="subunit">
    <text evidence="2">The cytochrome bc1 complex contains 11 subunits: 3 respiratory subunits (MT-CYB, CYC1 and UQCRFS1), 2 core proteins (UQCRC1 and UQCRC2) and 6 low-molecular weight proteins (UQCRH/QCR6, UQCRB/QCR7, UQCRQ/QCR8, UQCR10/QCR9, UQCR11/QCR10 and a cleavage product of UQCRFS1). This cytochrome bc1 complex then forms a dimer.</text>
</comment>
<comment type="subcellular location">
    <subcellularLocation>
        <location evidence="2">Mitochondrion inner membrane</location>
        <topology evidence="2">Multi-pass membrane protein</topology>
    </subcellularLocation>
</comment>
<comment type="miscellaneous">
    <text evidence="1">Heme 1 (or BL or b562) is low-potential and absorbs at about 562 nm, and heme 2 (or BH or b566) is high-potential and absorbs at about 566 nm.</text>
</comment>
<comment type="similarity">
    <text evidence="3 4">Belongs to the cytochrome b family.</text>
</comment>
<comment type="caution">
    <text evidence="2">The full-length protein contains only eight transmembrane helices, not nine as predicted by bioinformatics tools.</text>
</comment>
<keyword id="KW-0249">Electron transport</keyword>
<keyword id="KW-0349">Heme</keyword>
<keyword id="KW-0408">Iron</keyword>
<keyword id="KW-0472">Membrane</keyword>
<keyword id="KW-0479">Metal-binding</keyword>
<keyword id="KW-0496">Mitochondrion</keyword>
<keyword id="KW-0999">Mitochondrion inner membrane</keyword>
<keyword id="KW-0679">Respiratory chain</keyword>
<keyword id="KW-0812">Transmembrane</keyword>
<keyword id="KW-1133">Transmembrane helix</keyword>
<keyword id="KW-0813">Transport</keyword>
<keyword id="KW-0830">Ubiquinone</keyword>
<sequence>MTNIRKSHPLFKIINDSLVDLPAPSNISSWWNFGSLLGICLGIQILTGLFLAMHYTSDTATAFQSVTHICRDVNYGWTLRYLHANGASMFFICLFLHVGRGLYYGSYIYTETWNVGILLLFAVMATAFMGYVLPWGQMSFWGATVITNLLSAIPYIGTNLVEWIWGGFSVDKATLTRFFAFHFLLPFIISALVVVHLLFLHETGSNNPTGIPSDMDMIPFHPYYTIKDMLGALTMILALLVLVLFSPDLLGDPDNYIPANPLNTPPHIKPEWYFLFAYAILRSIPNKLGGVLALVLSILILALMPLLHTSKQRSMMFRPLSQCLFWLLVADLLTLTWIGGQPVEHPFIIIGQLASILYFSLILILMPLVSIVENHLLKW</sequence>
<dbReference type="EMBL" id="DQ445705">
    <property type="protein sequence ID" value="ABE02425.1"/>
    <property type="molecule type" value="Genomic_DNA"/>
</dbReference>
<dbReference type="SMR" id="Q1PG56"/>
<dbReference type="GO" id="GO:0005743">
    <property type="term" value="C:mitochondrial inner membrane"/>
    <property type="evidence" value="ECO:0007669"/>
    <property type="project" value="UniProtKB-SubCell"/>
</dbReference>
<dbReference type="GO" id="GO:0045275">
    <property type="term" value="C:respiratory chain complex III"/>
    <property type="evidence" value="ECO:0007669"/>
    <property type="project" value="InterPro"/>
</dbReference>
<dbReference type="GO" id="GO:0046872">
    <property type="term" value="F:metal ion binding"/>
    <property type="evidence" value="ECO:0007669"/>
    <property type="project" value="UniProtKB-KW"/>
</dbReference>
<dbReference type="GO" id="GO:0008121">
    <property type="term" value="F:ubiquinol-cytochrome-c reductase activity"/>
    <property type="evidence" value="ECO:0007669"/>
    <property type="project" value="InterPro"/>
</dbReference>
<dbReference type="GO" id="GO:0006122">
    <property type="term" value="P:mitochondrial electron transport, ubiquinol to cytochrome c"/>
    <property type="evidence" value="ECO:0007669"/>
    <property type="project" value="TreeGrafter"/>
</dbReference>
<dbReference type="CDD" id="cd00290">
    <property type="entry name" value="cytochrome_b_C"/>
    <property type="match status" value="1"/>
</dbReference>
<dbReference type="CDD" id="cd00284">
    <property type="entry name" value="Cytochrome_b_N"/>
    <property type="match status" value="1"/>
</dbReference>
<dbReference type="FunFam" id="1.20.810.10:FF:000002">
    <property type="entry name" value="Cytochrome b"/>
    <property type="match status" value="1"/>
</dbReference>
<dbReference type="Gene3D" id="1.20.810.10">
    <property type="entry name" value="Cytochrome Bc1 Complex, Chain C"/>
    <property type="match status" value="1"/>
</dbReference>
<dbReference type="InterPro" id="IPR005798">
    <property type="entry name" value="Cyt_b/b6_C"/>
</dbReference>
<dbReference type="InterPro" id="IPR036150">
    <property type="entry name" value="Cyt_b/b6_C_sf"/>
</dbReference>
<dbReference type="InterPro" id="IPR005797">
    <property type="entry name" value="Cyt_b/b6_N"/>
</dbReference>
<dbReference type="InterPro" id="IPR027387">
    <property type="entry name" value="Cytb/b6-like_sf"/>
</dbReference>
<dbReference type="InterPro" id="IPR030689">
    <property type="entry name" value="Cytochrome_b"/>
</dbReference>
<dbReference type="InterPro" id="IPR048260">
    <property type="entry name" value="Cytochrome_b_C_euk/bac"/>
</dbReference>
<dbReference type="InterPro" id="IPR048259">
    <property type="entry name" value="Cytochrome_b_N_euk/bac"/>
</dbReference>
<dbReference type="InterPro" id="IPR016174">
    <property type="entry name" value="Di-haem_cyt_TM"/>
</dbReference>
<dbReference type="PANTHER" id="PTHR19271">
    <property type="entry name" value="CYTOCHROME B"/>
    <property type="match status" value="1"/>
</dbReference>
<dbReference type="PANTHER" id="PTHR19271:SF16">
    <property type="entry name" value="CYTOCHROME B"/>
    <property type="match status" value="1"/>
</dbReference>
<dbReference type="Pfam" id="PF00032">
    <property type="entry name" value="Cytochrom_B_C"/>
    <property type="match status" value="1"/>
</dbReference>
<dbReference type="Pfam" id="PF00033">
    <property type="entry name" value="Cytochrome_B"/>
    <property type="match status" value="1"/>
</dbReference>
<dbReference type="PIRSF" id="PIRSF038885">
    <property type="entry name" value="COB"/>
    <property type="match status" value="1"/>
</dbReference>
<dbReference type="SUPFAM" id="SSF81648">
    <property type="entry name" value="a domain/subunit of cytochrome bc1 complex (Ubiquinol-cytochrome c reductase)"/>
    <property type="match status" value="1"/>
</dbReference>
<dbReference type="SUPFAM" id="SSF81342">
    <property type="entry name" value="Transmembrane di-heme cytochromes"/>
    <property type="match status" value="1"/>
</dbReference>
<dbReference type="PROSITE" id="PS51003">
    <property type="entry name" value="CYTB_CTER"/>
    <property type="match status" value="1"/>
</dbReference>
<dbReference type="PROSITE" id="PS51002">
    <property type="entry name" value="CYTB_NTER"/>
    <property type="match status" value="1"/>
</dbReference>
<gene>
    <name type="primary">MT-CYB</name>
    <name type="synonym">COB</name>
    <name type="synonym">CYTB</name>
    <name type="synonym">MTCYB</name>
</gene>
<evidence type="ECO:0000250" key="1"/>
<evidence type="ECO:0000250" key="2">
    <source>
        <dbReference type="UniProtKB" id="P00157"/>
    </source>
</evidence>
<evidence type="ECO:0000255" key="3">
    <source>
        <dbReference type="PROSITE-ProRule" id="PRU00967"/>
    </source>
</evidence>
<evidence type="ECO:0000255" key="4">
    <source>
        <dbReference type="PROSITE-ProRule" id="PRU00968"/>
    </source>
</evidence>
<accession>Q1PG56</accession>
<reference key="1">
    <citation type="submission" date="2006-03" db="EMBL/GenBank/DDBJ databases">
        <title>Phylogenetic relationships of the enigmatic harpy fruit bat, Harpyionycteris (Mammalia: Chiroptera: Pteropodidae).</title>
        <authorList>
            <person name="Giannini N.P."/>
            <person name="Almeida F.C."/>
            <person name="DeSalle R."/>
            <person name="Simmons N.B."/>
        </authorList>
    </citation>
    <scope>NUCLEOTIDE SEQUENCE [GENOMIC DNA]</scope>
    <source>
        <strain>Isolate 3</strain>
    </source>
</reference>
<geneLocation type="mitochondrion"/>